<protein>
    <recommendedName>
        <fullName evidence="1">Photosystem II reaction center protein L</fullName>
        <shortName evidence="1">PSII-L</shortName>
    </recommendedName>
</protein>
<name>PSBL_LACSA</name>
<evidence type="ECO:0000255" key="1">
    <source>
        <dbReference type="HAMAP-Rule" id="MF_01317"/>
    </source>
</evidence>
<gene>
    <name evidence="1" type="primary">psbL</name>
</gene>
<sequence>MTQSNPNEQNVELNRTSLYWGLLLIFVLAVLFSNYFFN</sequence>
<comment type="function">
    <text evidence="1">One of the components of the core complex of photosystem II (PSII). PSII is a light-driven water:plastoquinone oxidoreductase that uses light energy to abstract electrons from H(2)O, generating O(2) and a proton gradient subsequently used for ATP formation. It consists of a core antenna complex that captures photons, and an electron transfer chain that converts photonic excitation into a charge separation. This subunit is found at the monomer-monomer interface and is required for correct PSII assembly and/or dimerization.</text>
</comment>
<comment type="subunit">
    <text evidence="1">PSII is composed of 1 copy each of membrane proteins PsbA, PsbB, PsbC, PsbD, PsbE, PsbF, PsbH, PsbI, PsbJ, PsbK, PsbL, PsbM, PsbT, PsbX, PsbY, PsbZ, Psb30/Ycf12, at least 3 peripheral proteins of the oxygen-evolving complex and a large number of cofactors. It forms dimeric complexes.</text>
</comment>
<comment type="subcellular location">
    <subcellularLocation>
        <location evidence="1">Plastid</location>
        <location evidence="1">Chloroplast thylakoid membrane</location>
        <topology evidence="1">Single-pass membrane protein</topology>
    </subcellularLocation>
</comment>
<comment type="similarity">
    <text evidence="1">Belongs to the PsbL family.</text>
</comment>
<accession>Q1KXK8</accession>
<organism>
    <name type="scientific">Lactuca sativa</name>
    <name type="common">Garden lettuce</name>
    <dbReference type="NCBI Taxonomy" id="4236"/>
    <lineage>
        <taxon>Eukaryota</taxon>
        <taxon>Viridiplantae</taxon>
        <taxon>Streptophyta</taxon>
        <taxon>Embryophyta</taxon>
        <taxon>Tracheophyta</taxon>
        <taxon>Spermatophyta</taxon>
        <taxon>Magnoliopsida</taxon>
        <taxon>eudicotyledons</taxon>
        <taxon>Gunneridae</taxon>
        <taxon>Pentapetalae</taxon>
        <taxon>asterids</taxon>
        <taxon>campanulids</taxon>
        <taxon>Asterales</taxon>
        <taxon>Asteraceae</taxon>
        <taxon>Cichorioideae</taxon>
        <taxon>Cichorieae</taxon>
        <taxon>Lactucinae</taxon>
        <taxon>Lactuca</taxon>
    </lineage>
</organism>
<reference key="1">
    <citation type="submission" date="2006-01" db="EMBL/GenBank/DDBJ databases">
        <title>A comparison of the first two published chloroplast genomes in Asteraceae: Lactuca and Helianthus.</title>
        <authorList>
            <person name="Timme R.E."/>
            <person name="Kuehl J.V."/>
            <person name="Boore J.L."/>
            <person name="Jansen R.K."/>
        </authorList>
    </citation>
    <scope>NUCLEOTIDE SEQUENCE [LARGE SCALE GENOMIC DNA]</scope>
    <source>
        <strain>cv. Salinas</strain>
    </source>
</reference>
<keyword id="KW-0150">Chloroplast</keyword>
<keyword id="KW-0472">Membrane</keyword>
<keyword id="KW-0602">Photosynthesis</keyword>
<keyword id="KW-0604">Photosystem II</keyword>
<keyword id="KW-0934">Plastid</keyword>
<keyword id="KW-0674">Reaction center</keyword>
<keyword id="KW-0793">Thylakoid</keyword>
<keyword id="KW-0812">Transmembrane</keyword>
<keyword id="KW-1133">Transmembrane helix</keyword>
<dbReference type="EMBL" id="DQ383816">
    <property type="protein sequence ID" value="ABD47248.1"/>
    <property type="molecule type" value="Genomic_DNA"/>
</dbReference>
<dbReference type="SMR" id="Q1KXK8"/>
<dbReference type="GO" id="GO:0009535">
    <property type="term" value="C:chloroplast thylakoid membrane"/>
    <property type="evidence" value="ECO:0007669"/>
    <property type="project" value="UniProtKB-SubCell"/>
</dbReference>
<dbReference type="GO" id="GO:0009539">
    <property type="term" value="C:photosystem II reaction center"/>
    <property type="evidence" value="ECO:0007669"/>
    <property type="project" value="InterPro"/>
</dbReference>
<dbReference type="GO" id="GO:0015979">
    <property type="term" value="P:photosynthesis"/>
    <property type="evidence" value="ECO:0007669"/>
    <property type="project" value="UniProtKB-UniRule"/>
</dbReference>
<dbReference type="HAMAP" id="MF_01317">
    <property type="entry name" value="PSII_PsbL"/>
    <property type="match status" value="1"/>
</dbReference>
<dbReference type="InterPro" id="IPR003372">
    <property type="entry name" value="PSII_PsbL"/>
</dbReference>
<dbReference type="InterPro" id="IPR037266">
    <property type="entry name" value="PSII_PsbL_sf"/>
</dbReference>
<dbReference type="NCBIfam" id="NF001972">
    <property type="entry name" value="PRK00753.1"/>
    <property type="match status" value="1"/>
</dbReference>
<dbReference type="Pfam" id="PF02419">
    <property type="entry name" value="PsbL"/>
    <property type="match status" value="1"/>
</dbReference>
<dbReference type="SUPFAM" id="SSF161017">
    <property type="entry name" value="Photosystem II reaction center protein L, PsbL"/>
    <property type="match status" value="1"/>
</dbReference>
<proteinExistence type="inferred from homology"/>
<feature type="chain" id="PRO_0000276212" description="Photosystem II reaction center protein L">
    <location>
        <begin position="1"/>
        <end position="38"/>
    </location>
</feature>
<feature type="transmembrane region" description="Helical" evidence="1">
    <location>
        <begin position="17"/>
        <end position="37"/>
    </location>
</feature>
<geneLocation type="chloroplast"/>